<proteinExistence type="evidence at protein level"/>
<sequence>MSAGDAVCTGWLVKSPPERKLQRYAWRKRWFVLRRGRMSGNPDVLEYYRNKHSSKPIRVIDLSECAVWKHVGPSFVRKEFQNNFVFIVKTTSRTFYLVAKTEQEMQVWVHSISQVCNLGHLEDGADSMESLSYTPSSLQPSSASSLLTAHAASSSLPRDDPNTNAVATEETRSESELLFLPDYLVLSNCETGRLHHTSLPTRCDSWSNSDRSLEQASFDDVFVDCLQPLPSSHLVHPSCHGSGAQEVPSSRPQAALIWSREINGPPRDHLSSSPLLESSLSSTIQVDKNQGSLPCGAKELDIMSNTPPPRPPKPSHLSERRQEEWSTHSGSKKPECTLVPRRISLSGLDNMRTWKADVEGQSLRHRDKRLSLNLPCRFSPMYPTASASIEDSYVPMSPQAGASGLGPHCSPDDYIPMNSGSISSPLPELPANLEPPPVNRDLKPQRKSRPPPLDLRNLSIIREHASLTRTRTVPCSRTSFLSPERNGINSARFFANPVSREDEESYIEMEEHRTASSLSSGALTWTKKFSLDYLALDFNSASPAPMQQKLLLSEEQRVDYVQVDEQKTQALQSTKQEWTDERQSKV</sequence>
<accession>Q8WWW8</accession>
<accession>A6NHF8</accession>
<accession>E9PB44</accession>
<feature type="chain" id="PRO_0000318939" description="GRB2-associated-binding protein 3">
    <location>
        <begin position="1"/>
        <end position="586"/>
    </location>
</feature>
<feature type="domain" description="PH" evidence="2">
    <location>
        <begin position="5"/>
        <end position="117"/>
    </location>
</feature>
<feature type="region of interest" description="Disordered" evidence="3">
    <location>
        <begin position="149"/>
        <end position="171"/>
    </location>
</feature>
<feature type="region of interest" description="Disordered" evidence="3">
    <location>
        <begin position="281"/>
        <end position="335"/>
    </location>
</feature>
<feature type="region of interest" description="Disordered" evidence="3">
    <location>
        <begin position="401"/>
        <end position="453"/>
    </location>
</feature>
<feature type="compositionally biased region" description="Polar residues" evidence="3">
    <location>
        <begin position="283"/>
        <end position="292"/>
    </location>
</feature>
<feature type="compositionally biased region" description="Basic and acidic residues" evidence="3">
    <location>
        <begin position="316"/>
        <end position="326"/>
    </location>
</feature>
<feature type="modified residue" description="Phosphoserine" evidence="6">
    <location>
        <position position="344"/>
    </location>
</feature>
<feature type="modified residue" description="Phosphoserine" evidence="6">
    <location>
        <position position="482"/>
    </location>
</feature>
<feature type="splice variant" id="VSP_045033" description="In isoform 2 and isoform 3." evidence="4">
    <original>A</original>
    <variation>AA</variation>
    <location>
        <position position="125"/>
    </location>
</feature>
<feature type="splice variant" id="VSP_055259" description="In isoform 3." evidence="4">
    <location>
        <begin position="510"/>
        <end position="548"/>
    </location>
</feature>
<feature type="sequence variant" id="VAR_038917" description="In dbSNP:rs17281349.">
    <original>P</original>
    <variation>S</variation>
    <location>
        <position position="237"/>
    </location>
</feature>
<evidence type="ECO:0000250" key="1"/>
<evidence type="ECO:0000255" key="2">
    <source>
        <dbReference type="PROSITE-ProRule" id="PRU00145"/>
    </source>
</evidence>
<evidence type="ECO:0000256" key="3">
    <source>
        <dbReference type="SAM" id="MobiDB-lite"/>
    </source>
</evidence>
<evidence type="ECO:0000303" key="4">
    <source>
    </source>
</evidence>
<evidence type="ECO:0000305" key="5"/>
<evidence type="ECO:0007744" key="6">
    <source>
    </source>
</evidence>
<keyword id="KW-0025">Alternative splicing</keyword>
<keyword id="KW-0597">Phosphoprotein</keyword>
<keyword id="KW-1267">Proteomics identification</keyword>
<keyword id="KW-1185">Reference proteome</keyword>
<protein>
    <recommendedName>
        <fullName>GRB2-associated-binding protein 3</fullName>
    </recommendedName>
    <alternativeName>
        <fullName>GRB2-associated binder 3</fullName>
    </alternativeName>
    <alternativeName>
        <fullName>Growth factor receptor bound protein 2-associated protein 3</fullName>
    </alternativeName>
</protein>
<reference key="1">
    <citation type="journal article" date="2002" name="Mol. Cell. Biol.">
        <title>Gab3, a new DOS/Gab family member, facilitates macrophage differentiation.</title>
        <authorList>
            <person name="Wolf I."/>
            <person name="Jenkins B.J."/>
            <person name="Liu Y."/>
            <person name="Seiffert M."/>
            <person name="Custodio J.M."/>
            <person name="Young P."/>
            <person name="Rohrschneider L.R."/>
        </authorList>
    </citation>
    <scope>NUCLEOTIDE SEQUENCE [MRNA] (ISOFORM 1)</scope>
    <source>
        <tissue>Dendritic cell</tissue>
        <tissue>Eosinophil</tissue>
    </source>
</reference>
<reference key="2">
    <citation type="journal article" date="2004" name="Nat. Genet.">
        <title>Complete sequencing and characterization of 21,243 full-length human cDNAs.</title>
        <authorList>
            <person name="Ota T."/>
            <person name="Suzuki Y."/>
            <person name="Nishikawa T."/>
            <person name="Otsuki T."/>
            <person name="Sugiyama T."/>
            <person name="Irie R."/>
            <person name="Wakamatsu A."/>
            <person name="Hayashi K."/>
            <person name="Sato H."/>
            <person name="Nagai K."/>
            <person name="Kimura K."/>
            <person name="Makita H."/>
            <person name="Sekine M."/>
            <person name="Obayashi M."/>
            <person name="Nishi T."/>
            <person name="Shibahara T."/>
            <person name="Tanaka T."/>
            <person name="Ishii S."/>
            <person name="Yamamoto J."/>
            <person name="Saito K."/>
            <person name="Kawai Y."/>
            <person name="Isono Y."/>
            <person name="Nakamura Y."/>
            <person name="Nagahari K."/>
            <person name="Murakami K."/>
            <person name="Yasuda T."/>
            <person name="Iwayanagi T."/>
            <person name="Wagatsuma M."/>
            <person name="Shiratori A."/>
            <person name="Sudo H."/>
            <person name="Hosoiri T."/>
            <person name="Kaku Y."/>
            <person name="Kodaira H."/>
            <person name="Kondo H."/>
            <person name="Sugawara M."/>
            <person name="Takahashi M."/>
            <person name="Kanda K."/>
            <person name="Yokoi T."/>
            <person name="Furuya T."/>
            <person name="Kikkawa E."/>
            <person name="Omura Y."/>
            <person name="Abe K."/>
            <person name="Kamihara K."/>
            <person name="Katsuta N."/>
            <person name="Sato K."/>
            <person name="Tanikawa M."/>
            <person name="Yamazaki M."/>
            <person name="Ninomiya K."/>
            <person name="Ishibashi T."/>
            <person name="Yamashita H."/>
            <person name="Murakawa K."/>
            <person name="Fujimori K."/>
            <person name="Tanai H."/>
            <person name="Kimata M."/>
            <person name="Watanabe M."/>
            <person name="Hiraoka S."/>
            <person name="Chiba Y."/>
            <person name="Ishida S."/>
            <person name="Ono Y."/>
            <person name="Takiguchi S."/>
            <person name="Watanabe S."/>
            <person name="Yosida M."/>
            <person name="Hotuta T."/>
            <person name="Kusano J."/>
            <person name="Kanehori K."/>
            <person name="Takahashi-Fujii A."/>
            <person name="Hara H."/>
            <person name="Tanase T.-O."/>
            <person name="Nomura Y."/>
            <person name="Togiya S."/>
            <person name="Komai F."/>
            <person name="Hara R."/>
            <person name="Takeuchi K."/>
            <person name="Arita M."/>
            <person name="Imose N."/>
            <person name="Musashino K."/>
            <person name="Yuuki H."/>
            <person name="Oshima A."/>
            <person name="Sasaki N."/>
            <person name="Aotsuka S."/>
            <person name="Yoshikawa Y."/>
            <person name="Matsunawa H."/>
            <person name="Ichihara T."/>
            <person name="Shiohata N."/>
            <person name="Sano S."/>
            <person name="Moriya S."/>
            <person name="Momiyama H."/>
            <person name="Satoh N."/>
            <person name="Takami S."/>
            <person name="Terashima Y."/>
            <person name="Suzuki O."/>
            <person name="Nakagawa S."/>
            <person name="Senoh A."/>
            <person name="Mizoguchi H."/>
            <person name="Goto Y."/>
            <person name="Shimizu F."/>
            <person name="Wakebe H."/>
            <person name="Hishigaki H."/>
            <person name="Watanabe T."/>
            <person name="Sugiyama A."/>
            <person name="Takemoto M."/>
            <person name="Kawakami B."/>
            <person name="Yamazaki M."/>
            <person name="Watanabe K."/>
            <person name="Kumagai A."/>
            <person name="Itakura S."/>
            <person name="Fukuzumi Y."/>
            <person name="Fujimori Y."/>
            <person name="Komiyama M."/>
            <person name="Tashiro H."/>
            <person name="Tanigami A."/>
            <person name="Fujiwara T."/>
            <person name="Ono T."/>
            <person name="Yamada K."/>
            <person name="Fujii Y."/>
            <person name="Ozaki K."/>
            <person name="Hirao M."/>
            <person name="Ohmori Y."/>
            <person name="Kawabata A."/>
            <person name="Hikiji T."/>
            <person name="Kobatake N."/>
            <person name="Inagaki H."/>
            <person name="Ikema Y."/>
            <person name="Okamoto S."/>
            <person name="Okitani R."/>
            <person name="Kawakami T."/>
            <person name="Noguchi S."/>
            <person name="Itoh T."/>
            <person name="Shigeta K."/>
            <person name="Senba T."/>
            <person name="Matsumura K."/>
            <person name="Nakajima Y."/>
            <person name="Mizuno T."/>
            <person name="Morinaga M."/>
            <person name="Sasaki M."/>
            <person name="Togashi T."/>
            <person name="Oyama M."/>
            <person name="Hata H."/>
            <person name="Watanabe M."/>
            <person name="Komatsu T."/>
            <person name="Mizushima-Sugano J."/>
            <person name="Satoh T."/>
            <person name="Shirai Y."/>
            <person name="Takahashi Y."/>
            <person name="Nakagawa K."/>
            <person name="Okumura K."/>
            <person name="Nagase T."/>
            <person name="Nomura N."/>
            <person name="Kikuchi H."/>
            <person name="Masuho Y."/>
            <person name="Yamashita R."/>
            <person name="Nakai K."/>
            <person name="Yada T."/>
            <person name="Nakamura Y."/>
            <person name="Ohara O."/>
            <person name="Isogai T."/>
            <person name="Sugano S."/>
        </authorList>
    </citation>
    <scope>NUCLEOTIDE SEQUENCE [LARGE SCALE MRNA] (ISOFORMS 2 AND 3)</scope>
    <source>
        <tissue>Thalamus</tissue>
        <tissue>Trachea</tissue>
    </source>
</reference>
<reference key="3">
    <citation type="journal article" date="2005" name="Nature">
        <title>The DNA sequence of the human X chromosome.</title>
        <authorList>
            <person name="Ross M.T."/>
            <person name="Grafham D.V."/>
            <person name="Coffey A.J."/>
            <person name="Scherer S."/>
            <person name="McLay K."/>
            <person name="Muzny D."/>
            <person name="Platzer M."/>
            <person name="Howell G.R."/>
            <person name="Burrows C."/>
            <person name="Bird C.P."/>
            <person name="Frankish A."/>
            <person name="Lovell F.L."/>
            <person name="Howe K.L."/>
            <person name="Ashurst J.L."/>
            <person name="Fulton R.S."/>
            <person name="Sudbrak R."/>
            <person name="Wen G."/>
            <person name="Jones M.C."/>
            <person name="Hurles M.E."/>
            <person name="Andrews T.D."/>
            <person name="Scott C.E."/>
            <person name="Searle S."/>
            <person name="Ramser J."/>
            <person name="Whittaker A."/>
            <person name="Deadman R."/>
            <person name="Carter N.P."/>
            <person name="Hunt S.E."/>
            <person name="Chen R."/>
            <person name="Cree A."/>
            <person name="Gunaratne P."/>
            <person name="Havlak P."/>
            <person name="Hodgson A."/>
            <person name="Metzker M.L."/>
            <person name="Richards S."/>
            <person name="Scott G."/>
            <person name="Steffen D."/>
            <person name="Sodergren E."/>
            <person name="Wheeler D.A."/>
            <person name="Worley K.C."/>
            <person name="Ainscough R."/>
            <person name="Ambrose K.D."/>
            <person name="Ansari-Lari M.A."/>
            <person name="Aradhya S."/>
            <person name="Ashwell R.I."/>
            <person name="Babbage A.K."/>
            <person name="Bagguley C.L."/>
            <person name="Ballabio A."/>
            <person name="Banerjee R."/>
            <person name="Barker G.E."/>
            <person name="Barlow K.F."/>
            <person name="Barrett I.P."/>
            <person name="Bates K.N."/>
            <person name="Beare D.M."/>
            <person name="Beasley H."/>
            <person name="Beasley O."/>
            <person name="Beck A."/>
            <person name="Bethel G."/>
            <person name="Blechschmidt K."/>
            <person name="Brady N."/>
            <person name="Bray-Allen S."/>
            <person name="Bridgeman A.M."/>
            <person name="Brown A.J."/>
            <person name="Brown M.J."/>
            <person name="Bonnin D."/>
            <person name="Bruford E.A."/>
            <person name="Buhay C."/>
            <person name="Burch P."/>
            <person name="Burford D."/>
            <person name="Burgess J."/>
            <person name="Burrill W."/>
            <person name="Burton J."/>
            <person name="Bye J.M."/>
            <person name="Carder C."/>
            <person name="Carrel L."/>
            <person name="Chako J."/>
            <person name="Chapman J.C."/>
            <person name="Chavez D."/>
            <person name="Chen E."/>
            <person name="Chen G."/>
            <person name="Chen Y."/>
            <person name="Chen Z."/>
            <person name="Chinault C."/>
            <person name="Ciccodicola A."/>
            <person name="Clark S.Y."/>
            <person name="Clarke G."/>
            <person name="Clee C.M."/>
            <person name="Clegg S."/>
            <person name="Clerc-Blankenburg K."/>
            <person name="Clifford K."/>
            <person name="Cobley V."/>
            <person name="Cole C.G."/>
            <person name="Conquer J.S."/>
            <person name="Corby N."/>
            <person name="Connor R.E."/>
            <person name="David R."/>
            <person name="Davies J."/>
            <person name="Davis C."/>
            <person name="Davis J."/>
            <person name="Delgado O."/>
            <person name="Deshazo D."/>
            <person name="Dhami P."/>
            <person name="Ding Y."/>
            <person name="Dinh H."/>
            <person name="Dodsworth S."/>
            <person name="Draper H."/>
            <person name="Dugan-Rocha S."/>
            <person name="Dunham A."/>
            <person name="Dunn M."/>
            <person name="Durbin K.J."/>
            <person name="Dutta I."/>
            <person name="Eades T."/>
            <person name="Ellwood M."/>
            <person name="Emery-Cohen A."/>
            <person name="Errington H."/>
            <person name="Evans K.L."/>
            <person name="Faulkner L."/>
            <person name="Francis F."/>
            <person name="Frankland J."/>
            <person name="Fraser A.E."/>
            <person name="Galgoczy P."/>
            <person name="Gilbert J."/>
            <person name="Gill R."/>
            <person name="Gloeckner G."/>
            <person name="Gregory S.G."/>
            <person name="Gribble S."/>
            <person name="Griffiths C."/>
            <person name="Grocock R."/>
            <person name="Gu Y."/>
            <person name="Gwilliam R."/>
            <person name="Hamilton C."/>
            <person name="Hart E.A."/>
            <person name="Hawes A."/>
            <person name="Heath P.D."/>
            <person name="Heitmann K."/>
            <person name="Hennig S."/>
            <person name="Hernandez J."/>
            <person name="Hinzmann B."/>
            <person name="Ho S."/>
            <person name="Hoffs M."/>
            <person name="Howden P.J."/>
            <person name="Huckle E.J."/>
            <person name="Hume J."/>
            <person name="Hunt P.J."/>
            <person name="Hunt A.R."/>
            <person name="Isherwood J."/>
            <person name="Jacob L."/>
            <person name="Johnson D."/>
            <person name="Jones S."/>
            <person name="de Jong P.J."/>
            <person name="Joseph S.S."/>
            <person name="Keenan S."/>
            <person name="Kelly S."/>
            <person name="Kershaw J.K."/>
            <person name="Khan Z."/>
            <person name="Kioschis P."/>
            <person name="Klages S."/>
            <person name="Knights A.J."/>
            <person name="Kosiura A."/>
            <person name="Kovar-Smith C."/>
            <person name="Laird G.K."/>
            <person name="Langford C."/>
            <person name="Lawlor S."/>
            <person name="Leversha M."/>
            <person name="Lewis L."/>
            <person name="Liu W."/>
            <person name="Lloyd C."/>
            <person name="Lloyd D.M."/>
            <person name="Loulseged H."/>
            <person name="Loveland J.E."/>
            <person name="Lovell J.D."/>
            <person name="Lozado R."/>
            <person name="Lu J."/>
            <person name="Lyne R."/>
            <person name="Ma J."/>
            <person name="Maheshwari M."/>
            <person name="Matthews L.H."/>
            <person name="McDowall J."/>
            <person name="McLaren S."/>
            <person name="McMurray A."/>
            <person name="Meidl P."/>
            <person name="Meitinger T."/>
            <person name="Milne S."/>
            <person name="Miner G."/>
            <person name="Mistry S.L."/>
            <person name="Morgan M."/>
            <person name="Morris S."/>
            <person name="Mueller I."/>
            <person name="Mullikin J.C."/>
            <person name="Nguyen N."/>
            <person name="Nordsiek G."/>
            <person name="Nyakatura G."/>
            <person name="O'dell C.N."/>
            <person name="Okwuonu G."/>
            <person name="Palmer S."/>
            <person name="Pandian R."/>
            <person name="Parker D."/>
            <person name="Parrish J."/>
            <person name="Pasternak S."/>
            <person name="Patel D."/>
            <person name="Pearce A.V."/>
            <person name="Pearson D.M."/>
            <person name="Pelan S.E."/>
            <person name="Perez L."/>
            <person name="Porter K.M."/>
            <person name="Ramsey Y."/>
            <person name="Reichwald K."/>
            <person name="Rhodes S."/>
            <person name="Ridler K.A."/>
            <person name="Schlessinger D."/>
            <person name="Schueler M.G."/>
            <person name="Sehra H.K."/>
            <person name="Shaw-Smith C."/>
            <person name="Shen H."/>
            <person name="Sheridan E.M."/>
            <person name="Shownkeen R."/>
            <person name="Skuce C.D."/>
            <person name="Smith M.L."/>
            <person name="Sotheran E.C."/>
            <person name="Steingruber H.E."/>
            <person name="Steward C.A."/>
            <person name="Storey R."/>
            <person name="Swann R.M."/>
            <person name="Swarbreck D."/>
            <person name="Tabor P.E."/>
            <person name="Taudien S."/>
            <person name="Taylor T."/>
            <person name="Teague B."/>
            <person name="Thomas K."/>
            <person name="Thorpe A."/>
            <person name="Timms K."/>
            <person name="Tracey A."/>
            <person name="Trevanion S."/>
            <person name="Tromans A.C."/>
            <person name="d'Urso M."/>
            <person name="Verduzco D."/>
            <person name="Villasana D."/>
            <person name="Waldron L."/>
            <person name="Wall M."/>
            <person name="Wang Q."/>
            <person name="Warren J."/>
            <person name="Warry G.L."/>
            <person name="Wei X."/>
            <person name="West A."/>
            <person name="Whitehead S.L."/>
            <person name="Whiteley M.N."/>
            <person name="Wilkinson J.E."/>
            <person name="Willey D.L."/>
            <person name="Williams G."/>
            <person name="Williams L."/>
            <person name="Williamson A."/>
            <person name="Williamson H."/>
            <person name="Wilming L."/>
            <person name="Woodmansey R.L."/>
            <person name="Wray P.W."/>
            <person name="Yen J."/>
            <person name="Zhang J."/>
            <person name="Zhou J."/>
            <person name="Zoghbi H."/>
            <person name="Zorilla S."/>
            <person name="Buck D."/>
            <person name="Reinhardt R."/>
            <person name="Poustka A."/>
            <person name="Rosenthal A."/>
            <person name="Lehrach H."/>
            <person name="Meindl A."/>
            <person name="Minx P.J."/>
            <person name="Hillier L.W."/>
            <person name="Willard H.F."/>
            <person name="Wilson R.K."/>
            <person name="Waterston R.H."/>
            <person name="Rice C.M."/>
            <person name="Vaudin M."/>
            <person name="Coulson A."/>
            <person name="Nelson D.L."/>
            <person name="Weinstock G."/>
            <person name="Sulston J.E."/>
            <person name="Durbin R.M."/>
            <person name="Hubbard T."/>
            <person name="Gibbs R.A."/>
            <person name="Beck S."/>
            <person name="Rogers J."/>
            <person name="Bentley D.R."/>
        </authorList>
    </citation>
    <scope>NUCLEOTIDE SEQUENCE [LARGE SCALE GENOMIC DNA]</scope>
</reference>
<reference key="4">
    <citation type="submission" date="2005-09" db="EMBL/GenBank/DDBJ databases">
        <authorList>
            <person name="Mural R.J."/>
            <person name="Istrail S."/>
            <person name="Sutton G.G."/>
            <person name="Florea L."/>
            <person name="Halpern A.L."/>
            <person name="Mobarry C.M."/>
            <person name="Lippert R."/>
            <person name="Walenz B."/>
            <person name="Shatkay H."/>
            <person name="Dew I."/>
            <person name="Miller J.R."/>
            <person name="Flanigan M.J."/>
            <person name="Edwards N.J."/>
            <person name="Bolanos R."/>
            <person name="Fasulo D."/>
            <person name="Halldorsson B.V."/>
            <person name="Hannenhalli S."/>
            <person name="Turner R."/>
            <person name="Yooseph S."/>
            <person name="Lu F."/>
            <person name="Nusskern D.R."/>
            <person name="Shue B.C."/>
            <person name="Zheng X.H."/>
            <person name="Zhong F."/>
            <person name="Delcher A.L."/>
            <person name="Huson D.H."/>
            <person name="Kravitz S.A."/>
            <person name="Mouchard L."/>
            <person name="Reinert K."/>
            <person name="Remington K.A."/>
            <person name="Clark A.G."/>
            <person name="Waterman M.S."/>
            <person name="Eichler E.E."/>
            <person name="Adams M.D."/>
            <person name="Hunkapiller M.W."/>
            <person name="Myers E.W."/>
            <person name="Venter J.C."/>
        </authorList>
    </citation>
    <scope>NUCLEOTIDE SEQUENCE [LARGE SCALE GENOMIC DNA]</scope>
</reference>
<reference key="5">
    <citation type="journal article" date="2013" name="J. Proteome Res.">
        <title>Toward a comprehensive characterization of a human cancer cell phosphoproteome.</title>
        <authorList>
            <person name="Zhou H."/>
            <person name="Di Palma S."/>
            <person name="Preisinger C."/>
            <person name="Peng M."/>
            <person name="Polat A.N."/>
            <person name="Heck A.J."/>
            <person name="Mohammed S."/>
        </authorList>
    </citation>
    <scope>PHOSPHORYLATION [LARGE SCALE ANALYSIS] AT SER-344 AND SER-482</scope>
    <scope>IDENTIFICATION BY MASS SPECTROMETRY [LARGE SCALE ANALYSIS]</scope>
    <source>
        <tissue>Erythroleukemia</tissue>
    </source>
</reference>
<name>GAB3_HUMAN</name>
<organism>
    <name type="scientific">Homo sapiens</name>
    <name type="common">Human</name>
    <dbReference type="NCBI Taxonomy" id="9606"/>
    <lineage>
        <taxon>Eukaryota</taxon>
        <taxon>Metazoa</taxon>
        <taxon>Chordata</taxon>
        <taxon>Craniata</taxon>
        <taxon>Vertebrata</taxon>
        <taxon>Euteleostomi</taxon>
        <taxon>Mammalia</taxon>
        <taxon>Eutheria</taxon>
        <taxon>Euarchontoglires</taxon>
        <taxon>Primates</taxon>
        <taxon>Haplorrhini</taxon>
        <taxon>Catarrhini</taxon>
        <taxon>Hominidae</taxon>
        <taxon>Homo</taxon>
    </lineage>
</organism>
<gene>
    <name type="primary">GAB3</name>
</gene>
<comment type="subunit">
    <text evidence="1">Interacts with PIK3R/p85, SHP2 and GRAP2/MONA (By similarity). May interact with Grb2.</text>
</comment>
<comment type="alternative products">
    <event type="alternative splicing"/>
    <isoform>
        <id>Q8WWW8-1</id>
        <name>1</name>
        <sequence type="displayed"/>
    </isoform>
    <isoform>
        <id>Q8WWW8-2</id>
        <name>2</name>
        <sequence type="described" ref="VSP_045033"/>
    </isoform>
    <isoform>
        <id>Q8WWW8-3</id>
        <name>3</name>
        <sequence type="described" ref="VSP_045033 VSP_055259"/>
    </isoform>
</comment>
<comment type="PTM">
    <text evidence="1">Phosphorylated on tyrosine residue(s) after macrophage colony-stimulating factor (M-CSF) receptor stimulation.</text>
</comment>
<comment type="similarity">
    <text evidence="5">Belongs to the GAB family.</text>
</comment>
<comment type="sequence caution" evidence="5">
    <conflict type="erroneous termination">
        <sequence resource="EMBL" id="AK307927"/>
    </conflict>
    <text>Extended C-terminus.</text>
</comment>
<dbReference type="EMBL" id="AY057989">
    <property type="protein sequence ID" value="AAL25825.1"/>
    <property type="molecule type" value="mRNA"/>
</dbReference>
<dbReference type="EMBL" id="AK126283">
    <property type="protein sequence ID" value="BAG54302.1"/>
    <property type="molecule type" value="mRNA"/>
</dbReference>
<dbReference type="EMBL" id="AK307927">
    <property type="status" value="NOT_ANNOTATED_CDS"/>
    <property type="molecule type" value="mRNA"/>
</dbReference>
<dbReference type="EMBL" id="AC107450">
    <property type="status" value="NOT_ANNOTATED_CDS"/>
    <property type="molecule type" value="Genomic_DNA"/>
</dbReference>
<dbReference type="EMBL" id="AC109993">
    <property type="status" value="NOT_ANNOTATED_CDS"/>
    <property type="molecule type" value="Genomic_DNA"/>
</dbReference>
<dbReference type="EMBL" id="CH471172">
    <property type="protein sequence ID" value="EAW72665.1"/>
    <property type="molecule type" value="Genomic_DNA"/>
</dbReference>
<dbReference type="EMBL" id="CH471172">
    <property type="protein sequence ID" value="EAW72667.1"/>
    <property type="molecule type" value="Genomic_DNA"/>
</dbReference>
<dbReference type="CCDS" id="CCDS14760.1">
    <molecule id="Q8WWW8-1"/>
</dbReference>
<dbReference type="CCDS" id="CCDS48198.1">
    <molecule id="Q8WWW8-2"/>
</dbReference>
<dbReference type="CCDS" id="CCDS65357.1">
    <molecule id="Q8WWW8-3"/>
</dbReference>
<dbReference type="RefSeq" id="NP_001075042.1">
    <molecule id="Q8WWW8-2"/>
    <property type="nucleotide sequence ID" value="NM_001081573.3"/>
</dbReference>
<dbReference type="RefSeq" id="NP_001269212.1">
    <molecule id="Q8WWW8-3"/>
    <property type="nucleotide sequence ID" value="NM_001282283.2"/>
</dbReference>
<dbReference type="RefSeq" id="NP_542179.1">
    <molecule id="Q8WWW8-1"/>
    <property type="nucleotide sequence ID" value="NM_080612.4"/>
</dbReference>
<dbReference type="RefSeq" id="XP_005274705.1">
    <molecule id="Q8WWW8-2"/>
    <property type="nucleotide sequence ID" value="XM_005274648.2"/>
</dbReference>
<dbReference type="RefSeq" id="XP_006724867.1">
    <molecule id="Q8WWW8-2"/>
    <property type="nucleotide sequence ID" value="XM_006724804.2"/>
</dbReference>
<dbReference type="RefSeq" id="XP_047297789.1">
    <molecule id="Q8WWW8-2"/>
    <property type="nucleotide sequence ID" value="XM_047441833.1"/>
</dbReference>
<dbReference type="RefSeq" id="XP_054182462.1">
    <molecule id="Q8WWW8-2"/>
    <property type="nucleotide sequence ID" value="XM_054326487.1"/>
</dbReference>
<dbReference type="RefSeq" id="XP_054182463.1">
    <molecule id="Q8WWW8-2"/>
    <property type="nucleotide sequence ID" value="XM_054326488.1"/>
</dbReference>
<dbReference type="RefSeq" id="XP_054182464.1">
    <molecule id="Q8WWW8-2"/>
    <property type="nucleotide sequence ID" value="XM_054326489.1"/>
</dbReference>
<dbReference type="SMR" id="Q8WWW8"/>
<dbReference type="BioGRID" id="126581">
    <property type="interactions" value="10"/>
</dbReference>
<dbReference type="ELM" id="Q8WWW8"/>
<dbReference type="FunCoup" id="Q8WWW8">
    <property type="interactions" value="927"/>
</dbReference>
<dbReference type="IntAct" id="Q8WWW8">
    <property type="interactions" value="2"/>
</dbReference>
<dbReference type="MINT" id="Q8WWW8"/>
<dbReference type="STRING" id="9606.ENSP00000399588"/>
<dbReference type="iPTMnet" id="Q8WWW8"/>
<dbReference type="PhosphoSitePlus" id="Q8WWW8"/>
<dbReference type="BioMuta" id="GAB3"/>
<dbReference type="DMDM" id="74716251"/>
<dbReference type="MassIVE" id="Q8WWW8"/>
<dbReference type="PaxDb" id="9606-ENSP00000399588"/>
<dbReference type="PeptideAtlas" id="Q8WWW8"/>
<dbReference type="ProteomicsDB" id="1194"/>
<dbReference type="ProteomicsDB" id="19139"/>
<dbReference type="ProteomicsDB" id="74948">
    <molecule id="Q8WWW8-1"/>
</dbReference>
<dbReference type="Antibodypedia" id="535">
    <property type="antibodies" value="128 antibodies from 24 providers"/>
</dbReference>
<dbReference type="DNASU" id="139716"/>
<dbReference type="Ensembl" id="ENST00000369568.8">
    <molecule id="Q8WWW8-3"/>
    <property type="protein sequence ID" value="ENSP00000358581.4"/>
    <property type="gene ID" value="ENSG00000160219.12"/>
</dbReference>
<dbReference type="Ensembl" id="ENST00000369575.7">
    <molecule id="Q8WWW8-1"/>
    <property type="protein sequence ID" value="ENSP00000358588.3"/>
    <property type="gene ID" value="ENSG00000160219.12"/>
</dbReference>
<dbReference type="Ensembl" id="ENST00000424127.3">
    <molecule id="Q8WWW8-2"/>
    <property type="protein sequence ID" value="ENSP00000399588.2"/>
    <property type="gene ID" value="ENSG00000160219.12"/>
</dbReference>
<dbReference type="GeneID" id="139716"/>
<dbReference type="KEGG" id="hsa:139716"/>
<dbReference type="MANE-Select" id="ENST00000424127.3">
    <molecule id="Q8WWW8-2"/>
    <property type="protein sequence ID" value="ENSP00000399588.2"/>
    <property type="RefSeq nucleotide sequence ID" value="NM_001081573.3"/>
    <property type="RefSeq protein sequence ID" value="NP_001075042.1"/>
</dbReference>
<dbReference type="UCSC" id="uc004fmj.3">
    <molecule id="Q8WWW8-1"/>
    <property type="organism name" value="human"/>
</dbReference>
<dbReference type="AGR" id="HGNC:17515"/>
<dbReference type="CTD" id="139716"/>
<dbReference type="DisGeNET" id="139716"/>
<dbReference type="GeneCards" id="GAB3"/>
<dbReference type="HGNC" id="HGNC:17515">
    <property type="gene designation" value="GAB3"/>
</dbReference>
<dbReference type="HPA" id="ENSG00000160219">
    <property type="expression patterns" value="Tissue enhanced (bone marrow, lymphoid tissue)"/>
</dbReference>
<dbReference type="MIM" id="300482">
    <property type="type" value="gene"/>
</dbReference>
<dbReference type="neXtProt" id="NX_Q8WWW8"/>
<dbReference type="OpenTargets" id="ENSG00000160219"/>
<dbReference type="PharmGKB" id="PA28479"/>
<dbReference type="VEuPathDB" id="HostDB:ENSG00000160219"/>
<dbReference type="eggNOG" id="ENOG502QU11">
    <property type="taxonomic scope" value="Eukaryota"/>
</dbReference>
<dbReference type="GeneTree" id="ENSGT00940000159803"/>
<dbReference type="HOGENOM" id="CLU_028652_1_0_1"/>
<dbReference type="InParanoid" id="Q8WWW8"/>
<dbReference type="OMA" id="FTWTKKF"/>
<dbReference type="OrthoDB" id="360585at2759"/>
<dbReference type="PAN-GO" id="Q8WWW8">
    <property type="GO annotations" value="3 GO annotations based on evolutionary models"/>
</dbReference>
<dbReference type="PhylomeDB" id="Q8WWW8"/>
<dbReference type="TreeFam" id="TF329487"/>
<dbReference type="PathwayCommons" id="Q8WWW8"/>
<dbReference type="Reactome" id="R-HSA-9680350">
    <property type="pathway name" value="Signaling by CSF1 (M-CSF) in myeloid cells"/>
</dbReference>
<dbReference type="SignaLink" id="Q8WWW8"/>
<dbReference type="BioGRID-ORCS" id="139716">
    <property type="hits" value="18 hits in 772 CRISPR screens"/>
</dbReference>
<dbReference type="ChiTaRS" id="GAB3">
    <property type="organism name" value="human"/>
</dbReference>
<dbReference type="GenomeRNAi" id="139716"/>
<dbReference type="Pharos" id="Q8WWW8">
    <property type="development level" value="Tbio"/>
</dbReference>
<dbReference type="PRO" id="PR:Q8WWW8"/>
<dbReference type="Proteomes" id="UP000005640">
    <property type="component" value="Chromosome X"/>
</dbReference>
<dbReference type="RNAct" id="Q8WWW8">
    <property type="molecule type" value="protein"/>
</dbReference>
<dbReference type="Bgee" id="ENSG00000160219">
    <property type="expression patterns" value="Expressed in left ventricle myocardium and 122 other cell types or tissues"/>
</dbReference>
<dbReference type="ExpressionAtlas" id="Q8WWW8">
    <property type="expression patterns" value="baseline and differential"/>
</dbReference>
<dbReference type="GO" id="GO:0005737">
    <property type="term" value="C:cytoplasm"/>
    <property type="evidence" value="ECO:0000318"/>
    <property type="project" value="GO_Central"/>
</dbReference>
<dbReference type="GO" id="GO:0035591">
    <property type="term" value="F:signaling adaptor activity"/>
    <property type="evidence" value="ECO:0000318"/>
    <property type="project" value="GO_Central"/>
</dbReference>
<dbReference type="GO" id="GO:0030225">
    <property type="term" value="P:macrophage differentiation"/>
    <property type="evidence" value="ECO:0007669"/>
    <property type="project" value="Ensembl"/>
</dbReference>
<dbReference type="GO" id="GO:0007165">
    <property type="term" value="P:signal transduction"/>
    <property type="evidence" value="ECO:0000318"/>
    <property type="project" value="GO_Central"/>
</dbReference>
<dbReference type="CDD" id="cd13385">
    <property type="entry name" value="PH_Gab3"/>
    <property type="match status" value="1"/>
</dbReference>
<dbReference type="Gene3D" id="2.30.29.30">
    <property type="entry name" value="Pleckstrin-homology domain (PH domain)/Phosphotyrosine-binding domain (PTB)"/>
    <property type="match status" value="1"/>
</dbReference>
<dbReference type="InterPro" id="IPR046355">
    <property type="entry name" value="Gab1-4-like"/>
</dbReference>
<dbReference type="InterPro" id="IPR011993">
    <property type="entry name" value="PH-like_dom_sf"/>
</dbReference>
<dbReference type="InterPro" id="IPR001849">
    <property type="entry name" value="PH_domain"/>
</dbReference>
<dbReference type="PANTHER" id="PTHR45960">
    <property type="entry name" value="GRB2-ASSOCIATED-BINDING PROTEIN"/>
    <property type="match status" value="1"/>
</dbReference>
<dbReference type="PANTHER" id="PTHR45960:SF3">
    <property type="entry name" value="GRB2-ASSOCIATED-BINDING PROTEIN 3"/>
    <property type="match status" value="1"/>
</dbReference>
<dbReference type="Pfam" id="PF00169">
    <property type="entry name" value="PH"/>
    <property type="match status" value="1"/>
</dbReference>
<dbReference type="SMART" id="SM00233">
    <property type="entry name" value="PH"/>
    <property type="match status" value="1"/>
</dbReference>
<dbReference type="SUPFAM" id="SSF50729">
    <property type="entry name" value="PH domain-like"/>
    <property type="match status" value="1"/>
</dbReference>
<dbReference type="PROSITE" id="PS50003">
    <property type="entry name" value="PH_DOMAIN"/>
    <property type="match status" value="1"/>
</dbReference>